<accession>Q8ZMC4</accession>
<reference key="1">
    <citation type="journal article" date="2001" name="Nature">
        <title>Complete genome sequence of Salmonella enterica serovar Typhimurium LT2.</title>
        <authorList>
            <person name="McClelland M."/>
            <person name="Sanderson K.E."/>
            <person name="Spieth J."/>
            <person name="Clifton S.W."/>
            <person name="Latreille P."/>
            <person name="Courtney L."/>
            <person name="Porwollik S."/>
            <person name="Ali J."/>
            <person name="Dante M."/>
            <person name="Du F."/>
            <person name="Hou S."/>
            <person name="Layman D."/>
            <person name="Leonard S."/>
            <person name="Nguyen C."/>
            <person name="Scott K."/>
            <person name="Holmes A."/>
            <person name="Grewal N."/>
            <person name="Mulvaney E."/>
            <person name="Ryan E."/>
            <person name="Sun H."/>
            <person name="Florea L."/>
            <person name="Miller W."/>
            <person name="Stoneking T."/>
            <person name="Nhan M."/>
            <person name="Waterston R."/>
            <person name="Wilson R.K."/>
        </authorList>
    </citation>
    <scope>NUCLEOTIDE SEQUENCE [LARGE SCALE GENOMIC DNA]</scope>
    <source>
        <strain>LT2 / SGSC1412 / ATCC 700720</strain>
    </source>
</reference>
<feature type="chain" id="PRO_1000187203" description="L-fucose mutarotase">
    <location>
        <begin position="1"/>
        <end position="140"/>
    </location>
</feature>
<feature type="active site" description="Proton donor" evidence="1">
    <location>
        <position position="22"/>
    </location>
</feature>
<feature type="binding site" evidence="1">
    <location>
        <position position="30"/>
    </location>
    <ligand>
        <name>substrate</name>
    </ligand>
</feature>
<feature type="binding site" evidence="1">
    <location>
        <position position="107"/>
    </location>
    <ligand>
        <name>substrate</name>
    </ligand>
</feature>
<feature type="binding site" evidence="1">
    <location>
        <begin position="129"/>
        <end position="131"/>
    </location>
    <ligand>
        <name>substrate</name>
    </ligand>
</feature>
<evidence type="ECO:0000255" key="1">
    <source>
        <dbReference type="HAMAP-Rule" id="MF_01662"/>
    </source>
</evidence>
<comment type="function">
    <text evidence="1">Involved in the anomeric conversion of L-fucose.</text>
</comment>
<comment type="catalytic activity">
    <reaction evidence="1">
        <text>alpha-L-fucose = beta-L-fucose</text>
        <dbReference type="Rhea" id="RHEA:25580"/>
        <dbReference type="ChEBI" id="CHEBI:42548"/>
        <dbReference type="ChEBI" id="CHEBI:42589"/>
        <dbReference type="EC" id="5.1.3.29"/>
    </reaction>
</comment>
<comment type="pathway">
    <text evidence="1">Carbohydrate metabolism; L-fucose metabolism.</text>
</comment>
<comment type="subunit">
    <text evidence="1">Homodecamer.</text>
</comment>
<comment type="subcellular location">
    <subcellularLocation>
        <location evidence="1">Cytoplasm</location>
    </subcellularLocation>
</comment>
<comment type="similarity">
    <text evidence="1">Belongs to the RbsD / FucU family. FucU mutarotase subfamily.</text>
</comment>
<proteinExistence type="inferred from homology"/>
<protein>
    <recommendedName>
        <fullName evidence="1">L-fucose mutarotase</fullName>
        <ecNumber evidence="1">5.1.3.29</ecNumber>
    </recommendedName>
    <alternativeName>
        <fullName evidence="1">Fucose 1-epimerase</fullName>
    </alternativeName>
    <alternativeName>
        <fullName evidence="1">Type-2 mutarotase</fullName>
    </alternativeName>
</protein>
<dbReference type="EC" id="5.1.3.29" evidence="1"/>
<dbReference type="EMBL" id="AE006468">
    <property type="protein sequence ID" value="AAL21856.1"/>
    <property type="molecule type" value="Genomic_DNA"/>
</dbReference>
<dbReference type="RefSeq" id="NP_461897.1">
    <property type="nucleotide sequence ID" value="NC_003197.2"/>
</dbReference>
<dbReference type="RefSeq" id="WP_000920845.1">
    <property type="nucleotide sequence ID" value="NC_003197.2"/>
</dbReference>
<dbReference type="SMR" id="Q8ZMC4"/>
<dbReference type="STRING" id="99287.STM2978"/>
<dbReference type="PaxDb" id="99287-STM2978"/>
<dbReference type="GeneID" id="1254501"/>
<dbReference type="KEGG" id="stm:STM2978"/>
<dbReference type="PATRIC" id="fig|99287.12.peg.3154"/>
<dbReference type="HOGENOM" id="CLU_120075_1_0_6"/>
<dbReference type="OMA" id="PVWDTYT"/>
<dbReference type="PhylomeDB" id="Q8ZMC4"/>
<dbReference type="BioCyc" id="SENT99287:STM2978-MONOMER"/>
<dbReference type="UniPathway" id="UPA00956"/>
<dbReference type="Proteomes" id="UP000001014">
    <property type="component" value="Chromosome"/>
</dbReference>
<dbReference type="GO" id="GO:0005737">
    <property type="term" value="C:cytoplasm"/>
    <property type="evidence" value="ECO:0007669"/>
    <property type="project" value="UniProtKB-SubCell"/>
</dbReference>
<dbReference type="GO" id="GO:0042806">
    <property type="term" value="F:fucose binding"/>
    <property type="evidence" value="ECO:0000318"/>
    <property type="project" value="GO_Central"/>
</dbReference>
<dbReference type="GO" id="GO:0036373">
    <property type="term" value="F:L-fucose mutarotase activity"/>
    <property type="evidence" value="ECO:0007669"/>
    <property type="project" value="UniProtKB-EC"/>
</dbReference>
<dbReference type="GO" id="GO:0016857">
    <property type="term" value="F:racemase and epimerase activity, acting on carbohydrates and derivatives"/>
    <property type="evidence" value="ECO:0000318"/>
    <property type="project" value="GO_Central"/>
</dbReference>
<dbReference type="GO" id="GO:0006004">
    <property type="term" value="P:fucose metabolic process"/>
    <property type="evidence" value="ECO:0000318"/>
    <property type="project" value="GO_Central"/>
</dbReference>
<dbReference type="GO" id="GO:0036065">
    <property type="term" value="P:fucosylation"/>
    <property type="evidence" value="ECO:0000318"/>
    <property type="project" value="GO_Central"/>
</dbReference>
<dbReference type="GO" id="GO:0042354">
    <property type="term" value="P:L-fucose metabolic process"/>
    <property type="evidence" value="ECO:0007669"/>
    <property type="project" value="UniProtKB-UniRule"/>
</dbReference>
<dbReference type="FunFam" id="3.40.1650.10:FF:000001">
    <property type="entry name" value="L-fucose mutarotase"/>
    <property type="match status" value="1"/>
</dbReference>
<dbReference type="Gene3D" id="3.40.1650.10">
    <property type="entry name" value="RbsD-like domain"/>
    <property type="match status" value="1"/>
</dbReference>
<dbReference type="HAMAP" id="MF_01662">
    <property type="entry name" value="L_fucose_rotase"/>
    <property type="match status" value="1"/>
</dbReference>
<dbReference type="InterPro" id="IPR023751">
    <property type="entry name" value="L-fucose_mutarotase"/>
</dbReference>
<dbReference type="InterPro" id="IPR023750">
    <property type="entry name" value="RbsD-like_sf"/>
</dbReference>
<dbReference type="InterPro" id="IPR050443">
    <property type="entry name" value="RbsD/FucU_mutarotase"/>
</dbReference>
<dbReference type="InterPro" id="IPR007721">
    <property type="entry name" value="RbsD_FucU"/>
</dbReference>
<dbReference type="NCBIfam" id="NF011949">
    <property type="entry name" value="PRK15420.1"/>
    <property type="match status" value="1"/>
</dbReference>
<dbReference type="PANTHER" id="PTHR31690">
    <property type="entry name" value="FUCOSE MUTAROTASE"/>
    <property type="match status" value="1"/>
</dbReference>
<dbReference type="PANTHER" id="PTHR31690:SF4">
    <property type="entry name" value="FUCOSE MUTAROTASE"/>
    <property type="match status" value="1"/>
</dbReference>
<dbReference type="Pfam" id="PF05025">
    <property type="entry name" value="RbsD_FucU"/>
    <property type="match status" value="1"/>
</dbReference>
<dbReference type="SUPFAM" id="SSF102546">
    <property type="entry name" value="RbsD-like"/>
    <property type="match status" value="1"/>
</dbReference>
<organism>
    <name type="scientific">Salmonella typhimurium (strain LT2 / SGSC1412 / ATCC 700720)</name>
    <dbReference type="NCBI Taxonomy" id="99287"/>
    <lineage>
        <taxon>Bacteria</taxon>
        <taxon>Pseudomonadati</taxon>
        <taxon>Pseudomonadota</taxon>
        <taxon>Gammaproteobacteria</taxon>
        <taxon>Enterobacterales</taxon>
        <taxon>Enterobacteriaceae</taxon>
        <taxon>Salmonella</taxon>
    </lineage>
</organism>
<sequence length="140" mass="15281">MLKTISPLISPTLLKVLAEMGHGDEIIFSDAHFPAHSLGPQVIRADGLSVSDLLRAIIPLFELDSYAPPLVMMAAVEGDTLDPNVEARYRDALSLEAPCPDIVRIDRYAFYERAQKAFAIVITGECAKYGNILLKKGVTP</sequence>
<keyword id="KW-0119">Carbohydrate metabolism</keyword>
<keyword id="KW-0963">Cytoplasm</keyword>
<keyword id="KW-0294">Fucose metabolism</keyword>
<keyword id="KW-0413">Isomerase</keyword>
<keyword id="KW-1185">Reference proteome</keyword>
<gene>
    <name evidence="1" type="primary">fucU</name>
    <name type="ordered locus">STM2978</name>
</gene>
<name>FUCM_SALTY</name>